<dbReference type="EC" id="3.1.-.-" evidence="1"/>
<dbReference type="EMBL" id="CP000238">
    <property type="protein sequence ID" value="ABF14044.1"/>
    <property type="molecule type" value="Genomic_DNA"/>
</dbReference>
<dbReference type="RefSeq" id="WP_011520275.1">
    <property type="nucleotide sequence ID" value="NC_007984.1"/>
</dbReference>
<dbReference type="SMR" id="Q1LU22"/>
<dbReference type="STRING" id="374463.BCI_0064"/>
<dbReference type="KEGG" id="bci:BCI_0064"/>
<dbReference type="HOGENOM" id="CLU_106710_0_1_6"/>
<dbReference type="OrthoDB" id="9807740at2"/>
<dbReference type="Proteomes" id="UP000002427">
    <property type="component" value="Chromosome"/>
</dbReference>
<dbReference type="GO" id="GO:0005737">
    <property type="term" value="C:cytoplasm"/>
    <property type="evidence" value="ECO:0007669"/>
    <property type="project" value="UniProtKB-SubCell"/>
</dbReference>
<dbReference type="GO" id="GO:0004222">
    <property type="term" value="F:metalloendopeptidase activity"/>
    <property type="evidence" value="ECO:0007669"/>
    <property type="project" value="InterPro"/>
</dbReference>
<dbReference type="GO" id="GO:0004521">
    <property type="term" value="F:RNA endonuclease activity"/>
    <property type="evidence" value="ECO:0007669"/>
    <property type="project" value="UniProtKB-UniRule"/>
</dbReference>
<dbReference type="GO" id="GO:0008270">
    <property type="term" value="F:zinc ion binding"/>
    <property type="evidence" value="ECO:0007669"/>
    <property type="project" value="UniProtKB-UniRule"/>
</dbReference>
<dbReference type="GO" id="GO:0006364">
    <property type="term" value="P:rRNA processing"/>
    <property type="evidence" value="ECO:0007669"/>
    <property type="project" value="UniProtKB-UniRule"/>
</dbReference>
<dbReference type="Gene3D" id="3.40.390.30">
    <property type="entry name" value="Metalloproteases ('zincins'), catalytic domain"/>
    <property type="match status" value="1"/>
</dbReference>
<dbReference type="HAMAP" id="MF_00009">
    <property type="entry name" value="Endoribonucl_YbeY"/>
    <property type="match status" value="1"/>
</dbReference>
<dbReference type="InterPro" id="IPR023091">
    <property type="entry name" value="MetalPrtase_cat_dom_sf_prd"/>
</dbReference>
<dbReference type="InterPro" id="IPR002036">
    <property type="entry name" value="YbeY"/>
</dbReference>
<dbReference type="InterPro" id="IPR020549">
    <property type="entry name" value="YbeY_CS"/>
</dbReference>
<dbReference type="NCBIfam" id="TIGR00043">
    <property type="entry name" value="rRNA maturation RNase YbeY"/>
    <property type="match status" value="1"/>
</dbReference>
<dbReference type="PANTHER" id="PTHR46986">
    <property type="entry name" value="ENDORIBONUCLEASE YBEY, CHLOROPLASTIC"/>
    <property type="match status" value="1"/>
</dbReference>
<dbReference type="PANTHER" id="PTHR46986:SF1">
    <property type="entry name" value="ENDORIBONUCLEASE YBEY, CHLOROPLASTIC"/>
    <property type="match status" value="1"/>
</dbReference>
<dbReference type="Pfam" id="PF02130">
    <property type="entry name" value="YbeY"/>
    <property type="match status" value="1"/>
</dbReference>
<dbReference type="SUPFAM" id="SSF55486">
    <property type="entry name" value="Metalloproteases ('zincins'), catalytic domain"/>
    <property type="match status" value="1"/>
</dbReference>
<dbReference type="PROSITE" id="PS01306">
    <property type="entry name" value="UPF0054"/>
    <property type="match status" value="1"/>
</dbReference>
<proteinExistence type="inferred from homology"/>
<comment type="function">
    <text evidence="1">Single strand-specific metallo-endoribonuclease involved in late-stage 70S ribosome quality control and in maturation of the 3' terminus of the 16S rRNA.</text>
</comment>
<comment type="cofactor">
    <cofactor evidence="1">
        <name>Zn(2+)</name>
        <dbReference type="ChEBI" id="CHEBI:29105"/>
    </cofactor>
    <text evidence="1">Binds 1 zinc ion.</text>
</comment>
<comment type="subcellular location">
    <subcellularLocation>
        <location evidence="1">Cytoplasm</location>
    </subcellularLocation>
</comment>
<comment type="similarity">
    <text evidence="1">Belongs to the endoribonuclease YbeY family.</text>
</comment>
<accession>Q1LU22</accession>
<feature type="chain" id="PRO_0000284164" description="Endoribonuclease YbeY">
    <location>
        <begin position="1"/>
        <end position="155"/>
    </location>
</feature>
<feature type="binding site" evidence="1">
    <location>
        <position position="114"/>
    </location>
    <ligand>
        <name>Zn(2+)</name>
        <dbReference type="ChEBI" id="CHEBI:29105"/>
        <note>catalytic</note>
    </ligand>
</feature>
<feature type="binding site" evidence="1">
    <location>
        <position position="118"/>
    </location>
    <ligand>
        <name>Zn(2+)</name>
        <dbReference type="ChEBI" id="CHEBI:29105"/>
        <note>catalytic</note>
    </ligand>
</feature>
<feature type="binding site" evidence="1">
    <location>
        <position position="124"/>
    </location>
    <ligand>
        <name>Zn(2+)</name>
        <dbReference type="ChEBI" id="CHEBI:29105"/>
        <note>catalytic</note>
    </ligand>
</feature>
<gene>
    <name evidence="1" type="primary">ybeY</name>
    <name type="ordered locus">BCI_0064</name>
</gene>
<keyword id="KW-0963">Cytoplasm</keyword>
<keyword id="KW-0255">Endonuclease</keyword>
<keyword id="KW-0378">Hydrolase</keyword>
<keyword id="KW-0479">Metal-binding</keyword>
<keyword id="KW-0540">Nuclease</keyword>
<keyword id="KW-1185">Reference proteome</keyword>
<keyword id="KW-0690">Ribosome biogenesis</keyword>
<keyword id="KW-0698">rRNA processing</keyword>
<keyword id="KW-0862">Zinc</keyword>
<protein>
    <recommendedName>
        <fullName evidence="1">Endoribonuclease YbeY</fullName>
        <ecNumber evidence="1">3.1.-.-</ecNumber>
    </recommendedName>
</protein>
<organism>
    <name type="scientific">Baumannia cicadellinicola subsp. Homalodisca coagulata</name>
    <dbReference type="NCBI Taxonomy" id="374463"/>
    <lineage>
        <taxon>Bacteria</taxon>
        <taxon>Pseudomonadati</taxon>
        <taxon>Pseudomonadota</taxon>
        <taxon>Gammaproteobacteria</taxon>
        <taxon>Candidatus Palibaumannia</taxon>
    </lineage>
</organism>
<sequence length="155" mass="18199">MSKIILDLQVACDHRCNLPSEDLFMYWLYMVLPLFRKKAEVTIRLVDEAESYNLNKIYRGQNHSTNVLSFPFKAPSPVKLVLLGDIIICRQVVEREAQEQNKILEAYWAHMVIHGSLHLLGYDHFIEQNAKKMEYLETKIMHKLGYLNPYETEIS</sequence>
<name>YBEY_BAUCH</name>
<evidence type="ECO:0000255" key="1">
    <source>
        <dbReference type="HAMAP-Rule" id="MF_00009"/>
    </source>
</evidence>
<reference key="1">
    <citation type="journal article" date="2006" name="PLoS Biol.">
        <title>Metabolic complementarity and genomics of the dual bacterial symbiosis of sharpshooters.</title>
        <authorList>
            <person name="Wu D."/>
            <person name="Daugherty S.C."/>
            <person name="Van Aken S.E."/>
            <person name="Pai G.H."/>
            <person name="Watkins K.L."/>
            <person name="Khouri H."/>
            <person name="Tallon L.J."/>
            <person name="Zaborsky J.M."/>
            <person name="Dunbar H.E."/>
            <person name="Tran P.L."/>
            <person name="Moran N.A."/>
            <person name="Eisen J.A."/>
        </authorList>
    </citation>
    <scope>NUCLEOTIDE SEQUENCE [LARGE SCALE GENOMIC DNA]</scope>
</reference>